<accession>B8CXR8</accession>
<proteinExistence type="inferred from homology"/>
<organism>
    <name type="scientific">Halothermothrix orenii (strain H 168 / OCM 544 / DSM 9562)</name>
    <dbReference type="NCBI Taxonomy" id="373903"/>
    <lineage>
        <taxon>Bacteria</taxon>
        <taxon>Bacillati</taxon>
        <taxon>Bacillota</taxon>
        <taxon>Clostridia</taxon>
        <taxon>Halanaerobiales</taxon>
        <taxon>Halothermotrichaceae</taxon>
        <taxon>Halothermothrix</taxon>
    </lineage>
</organism>
<protein>
    <recommendedName>
        <fullName evidence="1">Leucine--tRNA ligase</fullName>
        <ecNumber evidence="1">6.1.1.4</ecNumber>
    </recommendedName>
    <alternativeName>
        <fullName evidence="1">Leucyl-tRNA synthetase</fullName>
        <shortName evidence="1">LeuRS</shortName>
    </alternativeName>
</protein>
<sequence>MKGYYNFADIEKKWQDKWEKDGLYKTQEETDKDNYYVLEMFPYPSGNLHMGHVRVYSIGDVIARFKRMNGYNVLHPMGWDAFGLPAENAAIKHGNIHPQDWTWDNIKNMKKQMKSLGLSYDWDREVTTAKEDYYKWTQWFFVKMFKKGLAYKKKAAVNWCPGCETVLANEQVVNNACERCGTEVEEKELEQWFFKITNYAERLLEDHKLLQNWPEKVKIMQRNWIGRSEGMRIKFPVKGSSEEIEVFTTRPDTIFGATYMVLAPEHPLVEKLISGTEKEKEVRQFIDRVKKQKEMERTSPESEKEGLFTGAYAINPMTGEEIPIMIANYVLMGYGTGAIMAVPAHDQRDFDFARKYDLPIRVVIQPEEREEELKDTDLNEAYEGSGHLINSDKYNGLTVKEAFDVMAEDMEKEGIGKREVNYRLRDWLISRQRYWGTPIPIVYCEKCGTVPVPEEELPVVLPRDVEFSPTGESPLAKVDEFVNTTCPVCGGKARRETDTMDTFVDSSWYFLRYTDPKNDKLPFSKENAKKWFPVDQYIGGIEHAILHLLYARFFTKVIYDMDMIDSVEPFTNWLAQGMVLKDGAKMSKSKGNVVDPEDILDRFGADTARLFILFAAPPEKDLEWSDRGVEGAERFLNRVWRLVADNIKEIKNTDQASLDVNSFNKNEKDLYRNLHVTIKRVTEDIGERLNFNTAISAIMELTNATYQYLNGVEKVNYTLIKDIIEKMLLILAPFAPHMTEELWSELGNDESIHIQKWPGYEEKALKKDEVTIVVQVNGKVRDKLQVSADIDEDKLKEQVLELPRIQKYTEGKEIVKTIIIPKKLVNIVVK</sequence>
<comment type="catalytic activity">
    <reaction evidence="1">
        <text>tRNA(Leu) + L-leucine + ATP = L-leucyl-tRNA(Leu) + AMP + diphosphate</text>
        <dbReference type="Rhea" id="RHEA:11688"/>
        <dbReference type="Rhea" id="RHEA-COMP:9613"/>
        <dbReference type="Rhea" id="RHEA-COMP:9622"/>
        <dbReference type="ChEBI" id="CHEBI:30616"/>
        <dbReference type="ChEBI" id="CHEBI:33019"/>
        <dbReference type="ChEBI" id="CHEBI:57427"/>
        <dbReference type="ChEBI" id="CHEBI:78442"/>
        <dbReference type="ChEBI" id="CHEBI:78494"/>
        <dbReference type="ChEBI" id="CHEBI:456215"/>
        <dbReference type="EC" id="6.1.1.4"/>
    </reaction>
</comment>
<comment type="subcellular location">
    <subcellularLocation>
        <location evidence="1">Cytoplasm</location>
    </subcellularLocation>
</comment>
<comment type="similarity">
    <text evidence="1">Belongs to the class-I aminoacyl-tRNA synthetase family.</text>
</comment>
<keyword id="KW-0030">Aminoacyl-tRNA synthetase</keyword>
<keyword id="KW-0067">ATP-binding</keyword>
<keyword id="KW-0963">Cytoplasm</keyword>
<keyword id="KW-0436">Ligase</keyword>
<keyword id="KW-0547">Nucleotide-binding</keyword>
<keyword id="KW-0648">Protein biosynthesis</keyword>
<keyword id="KW-1185">Reference proteome</keyword>
<gene>
    <name evidence="1" type="primary">leuS</name>
    <name type="ordered locus">Hore_13370</name>
</gene>
<reference key="1">
    <citation type="journal article" date="2009" name="PLoS ONE">
        <title>Genome analysis of the anaerobic thermohalophilic bacterium Halothermothrix orenii.</title>
        <authorList>
            <person name="Mavromatis K."/>
            <person name="Ivanova N."/>
            <person name="Anderson I."/>
            <person name="Lykidis A."/>
            <person name="Hooper S.D."/>
            <person name="Sun H."/>
            <person name="Kunin V."/>
            <person name="Lapidus A."/>
            <person name="Hugenholtz P."/>
            <person name="Patel B."/>
            <person name="Kyrpides N.C."/>
        </authorList>
    </citation>
    <scope>NUCLEOTIDE SEQUENCE [LARGE SCALE GENOMIC DNA]</scope>
    <source>
        <strain>H 168 / OCM 544 / DSM 9562</strain>
    </source>
</reference>
<evidence type="ECO:0000255" key="1">
    <source>
        <dbReference type="HAMAP-Rule" id="MF_00049"/>
    </source>
</evidence>
<dbReference type="EC" id="6.1.1.4" evidence="1"/>
<dbReference type="EMBL" id="CP001098">
    <property type="protein sequence ID" value="ACL70087.1"/>
    <property type="molecule type" value="Genomic_DNA"/>
</dbReference>
<dbReference type="RefSeq" id="WP_012636271.1">
    <property type="nucleotide sequence ID" value="NC_011899.1"/>
</dbReference>
<dbReference type="SMR" id="B8CXR8"/>
<dbReference type="STRING" id="373903.Hore_13370"/>
<dbReference type="KEGG" id="hor:Hore_13370"/>
<dbReference type="eggNOG" id="COG0495">
    <property type="taxonomic scope" value="Bacteria"/>
</dbReference>
<dbReference type="HOGENOM" id="CLU_004427_0_0_9"/>
<dbReference type="OrthoDB" id="9810365at2"/>
<dbReference type="Proteomes" id="UP000000719">
    <property type="component" value="Chromosome"/>
</dbReference>
<dbReference type="GO" id="GO:0005829">
    <property type="term" value="C:cytosol"/>
    <property type="evidence" value="ECO:0007669"/>
    <property type="project" value="TreeGrafter"/>
</dbReference>
<dbReference type="GO" id="GO:0002161">
    <property type="term" value="F:aminoacyl-tRNA deacylase activity"/>
    <property type="evidence" value="ECO:0007669"/>
    <property type="project" value="InterPro"/>
</dbReference>
<dbReference type="GO" id="GO:0005524">
    <property type="term" value="F:ATP binding"/>
    <property type="evidence" value="ECO:0007669"/>
    <property type="project" value="UniProtKB-UniRule"/>
</dbReference>
<dbReference type="GO" id="GO:0004823">
    <property type="term" value="F:leucine-tRNA ligase activity"/>
    <property type="evidence" value="ECO:0007669"/>
    <property type="project" value="UniProtKB-UniRule"/>
</dbReference>
<dbReference type="GO" id="GO:0006429">
    <property type="term" value="P:leucyl-tRNA aminoacylation"/>
    <property type="evidence" value="ECO:0007669"/>
    <property type="project" value="UniProtKB-UniRule"/>
</dbReference>
<dbReference type="CDD" id="cd07958">
    <property type="entry name" value="Anticodon_Ia_Leu_BEm"/>
    <property type="match status" value="1"/>
</dbReference>
<dbReference type="CDD" id="cd00812">
    <property type="entry name" value="LeuRS_core"/>
    <property type="match status" value="1"/>
</dbReference>
<dbReference type="FunFam" id="3.10.20.590:FF:000001">
    <property type="entry name" value="Leucine--tRNA ligase"/>
    <property type="match status" value="1"/>
</dbReference>
<dbReference type="FunFam" id="3.40.50.620:FF:000003">
    <property type="entry name" value="Leucine--tRNA ligase"/>
    <property type="match status" value="1"/>
</dbReference>
<dbReference type="FunFam" id="1.10.730.10:FF:000011">
    <property type="entry name" value="Leucine--tRNA ligase chloroplastic/mitochondrial"/>
    <property type="match status" value="1"/>
</dbReference>
<dbReference type="FunFam" id="3.40.50.620:FF:000100">
    <property type="entry name" value="probable leucine--tRNA ligase, mitochondrial"/>
    <property type="match status" value="1"/>
</dbReference>
<dbReference type="Gene3D" id="3.10.20.590">
    <property type="match status" value="1"/>
</dbReference>
<dbReference type="Gene3D" id="3.40.50.620">
    <property type="entry name" value="HUPs"/>
    <property type="match status" value="2"/>
</dbReference>
<dbReference type="Gene3D" id="1.10.730.10">
    <property type="entry name" value="Isoleucyl-tRNA Synthetase, Domain 1"/>
    <property type="match status" value="1"/>
</dbReference>
<dbReference type="HAMAP" id="MF_00049_B">
    <property type="entry name" value="Leu_tRNA_synth_B"/>
    <property type="match status" value="1"/>
</dbReference>
<dbReference type="InterPro" id="IPR001412">
    <property type="entry name" value="aa-tRNA-synth_I_CS"/>
</dbReference>
<dbReference type="InterPro" id="IPR002300">
    <property type="entry name" value="aa-tRNA-synth_Ia"/>
</dbReference>
<dbReference type="InterPro" id="IPR002302">
    <property type="entry name" value="Leu-tRNA-ligase"/>
</dbReference>
<dbReference type="InterPro" id="IPR025709">
    <property type="entry name" value="Leu_tRNA-synth_edit"/>
</dbReference>
<dbReference type="InterPro" id="IPR013155">
    <property type="entry name" value="M/V/L/I-tRNA-synth_anticd-bd"/>
</dbReference>
<dbReference type="InterPro" id="IPR015413">
    <property type="entry name" value="Methionyl/Leucyl_tRNA_Synth"/>
</dbReference>
<dbReference type="InterPro" id="IPR014729">
    <property type="entry name" value="Rossmann-like_a/b/a_fold"/>
</dbReference>
<dbReference type="InterPro" id="IPR009080">
    <property type="entry name" value="tRNAsynth_Ia_anticodon-bd"/>
</dbReference>
<dbReference type="InterPro" id="IPR009008">
    <property type="entry name" value="Val/Leu/Ile-tRNA-synth_edit"/>
</dbReference>
<dbReference type="NCBIfam" id="TIGR00396">
    <property type="entry name" value="leuS_bact"/>
    <property type="match status" value="1"/>
</dbReference>
<dbReference type="PANTHER" id="PTHR43740:SF2">
    <property type="entry name" value="LEUCINE--TRNA LIGASE, MITOCHONDRIAL"/>
    <property type="match status" value="1"/>
</dbReference>
<dbReference type="PANTHER" id="PTHR43740">
    <property type="entry name" value="LEUCYL-TRNA SYNTHETASE"/>
    <property type="match status" value="1"/>
</dbReference>
<dbReference type="Pfam" id="PF08264">
    <property type="entry name" value="Anticodon_1"/>
    <property type="match status" value="1"/>
</dbReference>
<dbReference type="Pfam" id="PF00133">
    <property type="entry name" value="tRNA-synt_1"/>
    <property type="match status" value="1"/>
</dbReference>
<dbReference type="Pfam" id="PF13603">
    <property type="entry name" value="tRNA-synt_1_2"/>
    <property type="match status" value="1"/>
</dbReference>
<dbReference type="Pfam" id="PF09334">
    <property type="entry name" value="tRNA-synt_1g"/>
    <property type="match status" value="1"/>
</dbReference>
<dbReference type="PRINTS" id="PR00985">
    <property type="entry name" value="TRNASYNTHLEU"/>
</dbReference>
<dbReference type="SUPFAM" id="SSF47323">
    <property type="entry name" value="Anticodon-binding domain of a subclass of class I aminoacyl-tRNA synthetases"/>
    <property type="match status" value="1"/>
</dbReference>
<dbReference type="SUPFAM" id="SSF52374">
    <property type="entry name" value="Nucleotidylyl transferase"/>
    <property type="match status" value="1"/>
</dbReference>
<dbReference type="SUPFAM" id="SSF50677">
    <property type="entry name" value="ValRS/IleRS/LeuRS editing domain"/>
    <property type="match status" value="1"/>
</dbReference>
<dbReference type="PROSITE" id="PS00178">
    <property type="entry name" value="AA_TRNA_LIGASE_I"/>
    <property type="match status" value="1"/>
</dbReference>
<feature type="chain" id="PRO_1000199209" description="Leucine--tRNA ligase">
    <location>
        <begin position="1"/>
        <end position="830"/>
    </location>
</feature>
<feature type="short sequence motif" description="'HIGH' region">
    <location>
        <begin position="42"/>
        <end position="52"/>
    </location>
</feature>
<feature type="short sequence motif" description="'KMSKS' region">
    <location>
        <begin position="585"/>
        <end position="589"/>
    </location>
</feature>
<feature type="binding site" evidence="1">
    <location>
        <position position="588"/>
    </location>
    <ligand>
        <name>ATP</name>
        <dbReference type="ChEBI" id="CHEBI:30616"/>
    </ligand>
</feature>
<name>SYL_HALOH</name>